<evidence type="ECO:0000250" key="1">
    <source>
        <dbReference type="UniProtKB" id="Q99P65"/>
    </source>
</evidence>
<evidence type="ECO:0000250" key="2">
    <source>
        <dbReference type="UniProtKB" id="Q9BZD2"/>
    </source>
</evidence>
<evidence type="ECO:0000255" key="3"/>
<evidence type="ECO:0000256" key="4">
    <source>
        <dbReference type="SAM" id="MobiDB-lite"/>
    </source>
</evidence>
<evidence type="ECO:0000305" key="5"/>
<gene>
    <name type="primary">SLC29A3</name>
    <name type="synonym">ENT3</name>
</gene>
<feature type="chain" id="PRO_0000376934" description="Equilibrative nucleoside transporter 3">
    <location>
        <begin position="1"/>
        <end position="474"/>
    </location>
</feature>
<feature type="topological domain" description="Cytoplasmic" evidence="3">
    <location>
        <begin position="1"/>
        <end position="53"/>
    </location>
</feature>
<feature type="transmembrane region" description="Helical" evidence="3">
    <location>
        <begin position="54"/>
        <end position="74"/>
    </location>
</feature>
<feature type="topological domain" description="Extracellular" evidence="3">
    <location>
        <begin position="75"/>
        <end position="105"/>
    </location>
</feature>
<feature type="transmembrane region" description="Helical" evidence="3">
    <location>
        <begin position="106"/>
        <end position="126"/>
    </location>
</feature>
<feature type="topological domain" description="Cytoplasmic" evidence="3">
    <location>
        <begin position="127"/>
        <end position="134"/>
    </location>
</feature>
<feature type="transmembrane region" description="Helical" evidence="3">
    <location>
        <begin position="135"/>
        <end position="155"/>
    </location>
</feature>
<feature type="topological domain" description="Extracellular" evidence="3">
    <location>
        <begin position="156"/>
        <end position="161"/>
    </location>
</feature>
<feature type="transmembrane region" description="Helical" evidence="3">
    <location>
        <begin position="162"/>
        <end position="182"/>
    </location>
</feature>
<feature type="topological domain" description="Cytoplasmic" evidence="3">
    <location>
        <begin position="183"/>
        <end position="201"/>
    </location>
</feature>
<feature type="transmembrane region" description="Helical" evidence="3">
    <location>
        <begin position="202"/>
        <end position="222"/>
    </location>
</feature>
<feature type="topological domain" description="Extracellular" evidence="3">
    <location>
        <begin position="223"/>
        <end position="230"/>
    </location>
</feature>
<feature type="transmembrane region" description="Helical" evidence="3">
    <location>
        <begin position="231"/>
        <end position="251"/>
    </location>
</feature>
<feature type="topological domain" description="Cytoplasmic" evidence="3">
    <location>
        <begin position="252"/>
        <end position="305"/>
    </location>
</feature>
<feature type="transmembrane region" description="Helical" evidence="3">
    <location>
        <begin position="306"/>
        <end position="326"/>
    </location>
</feature>
<feature type="topological domain" description="Extracellular" evidence="3">
    <location>
        <begin position="327"/>
        <end position="339"/>
    </location>
</feature>
<feature type="transmembrane region" description="Helical" evidence="3">
    <location>
        <begin position="340"/>
        <end position="357"/>
    </location>
</feature>
<feature type="topological domain" description="Cytoplasmic" evidence="3">
    <location>
        <begin position="358"/>
        <end position="376"/>
    </location>
</feature>
<feature type="transmembrane region" description="Helical" evidence="3">
    <location>
        <begin position="377"/>
        <end position="397"/>
    </location>
</feature>
<feature type="topological domain" description="Extracellular" evidence="3">
    <location>
        <begin position="398"/>
        <end position="414"/>
    </location>
</feature>
<feature type="transmembrane region" description="Helical" evidence="3">
    <location>
        <begin position="415"/>
        <end position="435"/>
    </location>
</feature>
<feature type="topological domain" description="Cytoplasmic" evidence="3">
    <location>
        <begin position="436"/>
        <end position="453"/>
    </location>
</feature>
<feature type="transmembrane region" description="Helical" evidence="3">
    <location>
        <begin position="454"/>
        <end position="474"/>
    </location>
</feature>
<feature type="region of interest" description="Disordered" evidence="4">
    <location>
        <begin position="272"/>
        <end position="294"/>
    </location>
</feature>
<feature type="short sequence motif" description="Dileucine internalization motif" evidence="2">
    <location>
        <begin position="31"/>
        <end position="32"/>
    </location>
</feature>
<feature type="compositionally biased region" description="Polar residues" evidence="4">
    <location>
        <begin position="276"/>
        <end position="292"/>
    </location>
</feature>
<feature type="site" description="Important for acidic pH-dependent nucleoside transporter activity. Acts as a pH sensor" evidence="2">
    <location>
        <position position="219"/>
    </location>
</feature>
<feature type="site" description="Important for acidic pH-dependent nucleoside transporter activity. Acts as a pH sensor" evidence="2">
    <location>
        <position position="446"/>
    </location>
</feature>
<feature type="modified residue" description="Phosphoserine" evidence="1">
    <location>
        <position position="21"/>
    </location>
</feature>
<feature type="modified residue" description="Phosphoserine" evidence="2">
    <location>
        <position position="23"/>
    </location>
</feature>
<feature type="glycosylation site" description="N-linked (GlcNAc...) asparagine" evidence="3">
    <location>
        <position position="84"/>
    </location>
</feature>
<accession>A1A4N1</accession>
<protein>
    <recommendedName>
        <fullName>Equilibrative nucleoside transporter 3</fullName>
    </recommendedName>
    <alternativeName>
        <fullName>Solute carrier family 29 member 3</fullName>
    </alternativeName>
</protein>
<organism>
    <name type="scientific">Bos taurus</name>
    <name type="common">Bovine</name>
    <dbReference type="NCBI Taxonomy" id="9913"/>
    <lineage>
        <taxon>Eukaryota</taxon>
        <taxon>Metazoa</taxon>
        <taxon>Chordata</taxon>
        <taxon>Craniata</taxon>
        <taxon>Vertebrata</taxon>
        <taxon>Euteleostomi</taxon>
        <taxon>Mammalia</taxon>
        <taxon>Eutheria</taxon>
        <taxon>Laurasiatheria</taxon>
        <taxon>Artiodactyla</taxon>
        <taxon>Ruminantia</taxon>
        <taxon>Pecora</taxon>
        <taxon>Bovidae</taxon>
        <taxon>Bovinae</taxon>
        <taxon>Bos</taxon>
    </lineage>
</organism>
<name>S29A3_BOVIN</name>
<dbReference type="EMBL" id="BC126741">
    <property type="protein sequence ID" value="AAI26742.1"/>
    <property type="molecule type" value="mRNA"/>
</dbReference>
<dbReference type="RefSeq" id="NP_001073692.1">
    <property type="nucleotide sequence ID" value="NM_001080223.1"/>
</dbReference>
<dbReference type="SMR" id="A1A4N1"/>
<dbReference type="FunCoup" id="A1A4N1">
    <property type="interactions" value="295"/>
</dbReference>
<dbReference type="STRING" id="9913.ENSBTAP00000054103"/>
<dbReference type="GlyCosmos" id="A1A4N1">
    <property type="glycosylation" value="1 site, No reported glycans"/>
</dbReference>
<dbReference type="GlyGen" id="A1A4N1">
    <property type="glycosylation" value="1 site"/>
</dbReference>
<dbReference type="PaxDb" id="9913-ENSBTAP00000054103"/>
<dbReference type="GeneID" id="504503"/>
<dbReference type="KEGG" id="bta:504503"/>
<dbReference type="CTD" id="55315"/>
<dbReference type="eggNOG" id="KOG1479">
    <property type="taxonomic scope" value="Eukaryota"/>
</dbReference>
<dbReference type="InParanoid" id="A1A4N1"/>
<dbReference type="OrthoDB" id="46396at2759"/>
<dbReference type="Proteomes" id="UP000009136">
    <property type="component" value="Unplaced"/>
</dbReference>
<dbReference type="GO" id="GO:0005794">
    <property type="term" value="C:Golgi apparatus"/>
    <property type="evidence" value="ECO:0000318"/>
    <property type="project" value="GO_Central"/>
</dbReference>
<dbReference type="GO" id="GO:0031902">
    <property type="term" value="C:late endosome membrane"/>
    <property type="evidence" value="ECO:0000250"/>
    <property type="project" value="UniProtKB"/>
</dbReference>
<dbReference type="GO" id="GO:0005765">
    <property type="term" value="C:lysosomal membrane"/>
    <property type="evidence" value="ECO:0000250"/>
    <property type="project" value="UniProtKB"/>
</dbReference>
<dbReference type="GO" id="GO:0031966">
    <property type="term" value="C:mitochondrial membrane"/>
    <property type="evidence" value="ECO:0007669"/>
    <property type="project" value="UniProtKB-SubCell"/>
</dbReference>
<dbReference type="GO" id="GO:0005886">
    <property type="term" value="C:plasma membrane"/>
    <property type="evidence" value="ECO:0000318"/>
    <property type="project" value="GO_Central"/>
</dbReference>
<dbReference type="GO" id="GO:0015212">
    <property type="term" value="F:cytidine transmembrane transporter activity"/>
    <property type="evidence" value="ECO:0000250"/>
    <property type="project" value="UniProtKB"/>
</dbReference>
<dbReference type="GO" id="GO:0015208">
    <property type="term" value="F:guanine transmembrane transporter activity"/>
    <property type="evidence" value="ECO:0000250"/>
    <property type="project" value="UniProtKB"/>
</dbReference>
<dbReference type="GO" id="GO:0008504">
    <property type="term" value="F:monoamine transmembrane transporter activity"/>
    <property type="evidence" value="ECO:0000250"/>
    <property type="project" value="UniProtKB"/>
</dbReference>
<dbReference type="GO" id="GO:0005326">
    <property type="term" value="F:neurotransmitter transmembrane transporter activity"/>
    <property type="evidence" value="ECO:0000250"/>
    <property type="project" value="UniProtKB"/>
</dbReference>
<dbReference type="GO" id="GO:0015205">
    <property type="term" value="F:nucleobase transmembrane transporter activity"/>
    <property type="evidence" value="ECO:0000250"/>
    <property type="project" value="UniProtKB"/>
</dbReference>
<dbReference type="GO" id="GO:0005337">
    <property type="term" value="F:nucleoside transmembrane transporter activity"/>
    <property type="evidence" value="ECO:0000250"/>
    <property type="project" value="UniProtKB"/>
</dbReference>
<dbReference type="GO" id="GO:0015101">
    <property type="term" value="F:organic cation transmembrane transporter activity"/>
    <property type="evidence" value="ECO:0000250"/>
    <property type="project" value="UniProtKB"/>
</dbReference>
<dbReference type="GO" id="GO:0015210">
    <property type="term" value="F:uracil transmembrane transporter activity"/>
    <property type="evidence" value="ECO:0000250"/>
    <property type="project" value="UniProtKB"/>
</dbReference>
<dbReference type="GO" id="GO:0015213">
    <property type="term" value="F:uridine transmembrane transporter activity"/>
    <property type="evidence" value="ECO:0000250"/>
    <property type="project" value="UniProtKB"/>
</dbReference>
<dbReference type="GO" id="GO:0032238">
    <property type="term" value="P:adenosine transport"/>
    <property type="evidence" value="ECO:0000250"/>
    <property type="project" value="UniProtKB"/>
</dbReference>
<dbReference type="GO" id="GO:0015861">
    <property type="term" value="P:cytidine transport"/>
    <property type="evidence" value="ECO:0000250"/>
    <property type="project" value="UniProtKB"/>
</dbReference>
<dbReference type="GO" id="GO:0015872">
    <property type="term" value="P:dopamine transport"/>
    <property type="evidence" value="ECO:0000250"/>
    <property type="project" value="UniProtKB"/>
</dbReference>
<dbReference type="GO" id="GO:1903716">
    <property type="term" value="P:guanine transmembrane transport"/>
    <property type="evidence" value="ECO:0000250"/>
    <property type="project" value="UniProtKB"/>
</dbReference>
<dbReference type="GO" id="GO:0035340">
    <property type="term" value="P:inosine transport"/>
    <property type="evidence" value="ECO:0000250"/>
    <property type="project" value="UniProtKB"/>
</dbReference>
<dbReference type="GO" id="GO:0015874">
    <property type="term" value="P:norepinephrine transport"/>
    <property type="evidence" value="ECO:0000250"/>
    <property type="project" value="UniProtKB"/>
</dbReference>
<dbReference type="GO" id="GO:0015851">
    <property type="term" value="P:nucleobase transport"/>
    <property type="evidence" value="ECO:0000250"/>
    <property type="project" value="UniProtKB"/>
</dbReference>
<dbReference type="GO" id="GO:1901642">
    <property type="term" value="P:nucleoside transmembrane transport"/>
    <property type="evidence" value="ECO:0000250"/>
    <property type="project" value="UniProtKB"/>
</dbReference>
<dbReference type="GO" id="GO:0015858">
    <property type="term" value="P:nucleoside transport"/>
    <property type="evidence" value="ECO:0000250"/>
    <property type="project" value="UniProtKB"/>
</dbReference>
<dbReference type="GO" id="GO:1904823">
    <property type="term" value="P:purine nucleobase transmembrane transport"/>
    <property type="evidence" value="ECO:0000250"/>
    <property type="project" value="UniProtKB"/>
</dbReference>
<dbReference type="GO" id="GO:1904082">
    <property type="term" value="P:pyrimidine nucleobase transmembrane transport"/>
    <property type="evidence" value="ECO:0000250"/>
    <property type="project" value="UniProtKB"/>
</dbReference>
<dbReference type="GO" id="GO:0006837">
    <property type="term" value="P:serotonin transport"/>
    <property type="evidence" value="ECO:0000250"/>
    <property type="project" value="UniProtKB"/>
</dbReference>
<dbReference type="GO" id="GO:1903791">
    <property type="term" value="P:uracil transmembrane transport"/>
    <property type="evidence" value="ECO:0000250"/>
    <property type="project" value="UniProtKB"/>
</dbReference>
<dbReference type="GO" id="GO:0015862">
    <property type="term" value="P:uridine transmembrane transport"/>
    <property type="evidence" value="ECO:0000250"/>
    <property type="project" value="UniProtKB"/>
</dbReference>
<dbReference type="InterPro" id="IPR002259">
    <property type="entry name" value="Eqnu_transpt"/>
</dbReference>
<dbReference type="PANTHER" id="PTHR10332">
    <property type="entry name" value="EQUILIBRATIVE NUCLEOSIDE TRANSPORTER"/>
    <property type="match status" value="1"/>
</dbReference>
<dbReference type="PANTHER" id="PTHR10332:SF17">
    <property type="entry name" value="EQUILIBRATIVE NUCLEOSIDE TRANSPORTER 3"/>
    <property type="match status" value="1"/>
</dbReference>
<dbReference type="Pfam" id="PF01733">
    <property type="entry name" value="Nucleoside_tran"/>
    <property type="match status" value="1"/>
</dbReference>
<dbReference type="PIRSF" id="PIRSF016379">
    <property type="entry name" value="ENT"/>
    <property type="match status" value="1"/>
</dbReference>
<dbReference type="PRINTS" id="PR01130">
    <property type="entry name" value="DERENTRNSPRT"/>
</dbReference>
<sequence>MAIISEDDFRHTSNSTYRTASSSLRADQEALLEKLLDRPPPSLQRPEDRFNGTYIIFFSLGIGGLLPWNFFVTAQEYWIFKLSNCSSPAAGEEPKDSDILNYFESYLAVASTVPSVLCLALNFLLVNRVPIRVRVLASLTVMLAIFIVMTVLVKVDTSSWTHSFFTITITCMAILSGTSTIFNSSVFGMTGSFPMRNSQALISGGAMGGTLSAVASLVDLAVASDVTDSTLAFFLTADIFLALCIGLYLLLPRLDYARYYMKPVWPTVFSGEEQLPQDSPSPTSVAPGSSDPQTPPLGPILKKTTGLGFCIIYLFFITSLIFPAICTNIESLSKGSGSPWSTKFFVPLTTFLLYNFADLCGRQVTAWIQVPGPRSKALPGLALLRTCFVPLFVFCNYQPRGHLHTVLFQSDVYPVLFTSLLGLSNGYLSTLALIYGPKIVPRELAEATGVVMTFYMGLGLVLGSACSALLVHLI</sequence>
<keyword id="KW-1003">Cell membrane</keyword>
<keyword id="KW-0967">Endosome</keyword>
<keyword id="KW-0325">Glycoprotein</keyword>
<keyword id="KW-0458">Lysosome</keyword>
<keyword id="KW-0472">Membrane</keyword>
<keyword id="KW-0496">Mitochondrion</keyword>
<keyword id="KW-0597">Phosphoprotein</keyword>
<keyword id="KW-1185">Reference proteome</keyword>
<keyword id="KW-0812">Transmembrane</keyword>
<keyword id="KW-1133">Transmembrane helix</keyword>
<keyword id="KW-0813">Transport</keyword>
<proteinExistence type="evidence at transcript level"/>
<comment type="function">
    <text evidence="1 2">Uniporter that mediates the facilitative transport of nucleoside across lysosomal and mitochondrial membranes. Functions as a non-electrogenic Na(+)-independent transporter. Substrate transport is pH-dependent and enhanced under acidic condition, probably reflecting the location of the transporter in acidic intracellular compartments. Proton is not a cotransporting ion but most likely change the ionization state of the transporter which dictates transport-permissible/impermissible conformation for nucleoside translocation. May direct the nucleoside transport from lysosomes to cytosol or cytosol to mitochondria to facilitate the fundamental function of salvage synthesis of nucleic acids. Involved in the transport of nucleosides (adenosine, guanosine, uridine, thymidine, cytidine and inosine) and deoxynucleosides (deoxyadenosine, deoxycytidine). Also mediates transport of purine nucleobases (adenine, guanine) and pyrimidine nucleobases (uracil). Also able to transport monoamine neurotransmitters dopamine, serotonin, noradrenaline and tyramine. Capable of transporting ATP (By similarity). Mediates nucleoside export from lysosomes in macrophages, which regulates macrophage functions and numbers (By similarity).</text>
</comment>
<comment type="catalytic activity">
    <reaction evidence="2">
        <text>adenosine(in) = adenosine(out)</text>
        <dbReference type="Rhea" id="RHEA:75343"/>
        <dbReference type="ChEBI" id="CHEBI:16335"/>
    </reaction>
</comment>
<comment type="catalytic activity">
    <reaction evidence="2">
        <text>guanosine(in) = guanosine(out)</text>
        <dbReference type="Rhea" id="RHEA:75371"/>
        <dbReference type="ChEBI" id="CHEBI:16750"/>
    </reaction>
</comment>
<comment type="catalytic activity">
    <reaction evidence="2">
        <text>inosine(in) = inosine(out)</text>
        <dbReference type="Rhea" id="RHEA:75375"/>
        <dbReference type="ChEBI" id="CHEBI:17596"/>
    </reaction>
</comment>
<comment type="catalytic activity">
    <reaction evidence="2">
        <text>uridine(out) = uridine(in)</text>
        <dbReference type="Rhea" id="RHEA:71519"/>
        <dbReference type="ChEBI" id="CHEBI:16704"/>
    </reaction>
</comment>
<comment type="catalytic activity">
    <reaction evidence="2">
        <text>cytidine(in) = cytidine(out)</text>
        <dbReference type="Rhea" id="RHEA:75367"/>
        <dbReference type="ChEBI" id="CHEBI:17562"/>
    </reaction>
</comment>
<comment type="catalytic activity">
    <reaction evidence="2">
        <text>thymidine(in) = thymidine(out)</text>
        <dbReference type="Rhea" id="RHEA:75363"/>
        <dbReference type="ChEBI" id="CHEBI:17748"/>
    </reaction>
</comment>
<comment type="catalytic activity">
    <reaction evidence="2">
        <text>2'-deoxyadenosine(in) = 2'-deoxyadenosine(out)</text>
        <dbReference type="Rhea" id="RHEA:75691"/>
        <dbReference type="ChEBI" id="CHEBI:17256"/>
    </reaction>
</comment>
<comment type="catalytic activity">
    <reaction evidence="2">
        <text>2'-deoxycytidine(in) = 2'-deoxycytidine(out)</text>
        <dbReference type="Rhea" id="RHEA:75695"/>
        <dbReference type="ChEBI" id="CHEBI:15698"/>
    </reaction>
</comment>
<comment type="catalytic activity">
    <reaction evidence="2">
        <text>guanine(out) = guanine(in)</text>
        <dbReference type="Rhea" id="RHEA:71531"/>
        <dbReference type="ChEBI" id="CHEBI:16235"/>
    </reaction>
</comment>
<comment type="catalytic activity">
    <reaction evidence="2">
        <text>uracil(in) = uracil(out)</text>
        <dbReference type="Rhea" id="RHEA:69404"/>
        <dbReference type="ChEBI" id="CHEBI:17568"/>
    </reaction>
</comment>
<comment type="catalytic activity">
    <reaction evidence="2">
        <text>(R)-noradrenaline(out) = (R)-noradrenaline(in)</text>
        <dbReference type="Rhea" id="RHEA:73871"/>
        <dbReference type="ChEBI" id="CHEBI:72587"/>
    </reaction>
</comment>
<comment type="catalytic activity">
    <reaction evidence="2">
        <text>dopamine(out) = dopamine(in)</text>
        <dbReference type="Rhea" id="RHEA:73863"/>
        <dbReference type="ChEBI" id="CHEBI:59905"/>
    </reaction>
</comment>
<comment type="catalytic activity">
    <reaction evidence="2">
        <text>serotonin(out) = serotonin(in)</text>
        <dbReference type="Rhea" id="RHEA:73867"/>
        <dbReference type="ChEBI" id="CHEBI:350546"/>
    </reaction>
</comment>
<comment type="catalytic activity">
    <reaction evidence="2">
        <text>tyramine(in) = tyramine(out)</text>
        <dbReference type="Rhea" id="RHEA:74783"/>
        <dbReference type="ChEBI" id="CHEBI:327995"/>
    </reaction>
</comment>
<comment type="catalytic activity">
    <reaction evidence="2">
        <text>ATP(in) = ATP(out)</text>
        <dbReference type="Rhea" id="RHEA:75687"/>
        <dbReference type="ChEBI" id="CHEBI:30616"/>
    </reaction>
</comment>
<comment type="subcellular location">
    <subcellularLocation>
        <location evidence="2">Lysosome membrane</location>
        <topology evidence="5">Multi-pass membrane protein</topology>
    </subcellularLocation>
    <subcellularLocation>
        <location evidence="2">Late endosome membrane</location>
        <topology evidence="5">Multi-pass membrane protein</topology>
    </subcellularLocation>
    <subcellularLocation>
        <location evidence="2">Mitochondrion membrane</location>
        <topology evidence="5">Multi-pass membrane protein</topology>
    </subcellularLocation>
    <subcellularLocation>
        <location evidence="2">Cell membrane</location>
        <topology evidence="5">Multi-pass membrane protein</topology>
    </subcellularLocation>
</comment>
<comment type="domain">
    <text evidence="2">Contains a N-terminal dileucine motif (DE)XXXL(LI) important for endosomal/lysosomal and mitochondrial subcellular localization.</text>
</comment>
<comment type="similarity">
    <text evidence="5">Belongs to the SLC29A/ENT transporter (TC 2.A.57) family.</text>
</comment>
<reference key="1">
    <citation type="submission" date="2006-10" db="EMBL/GenBank/DDBJ databases">
        <authorList>
            <consortium name="NIH - Mammalian Gene Collection (MGC) project"/>
        </authorList>
    </citation>
    <scope>NUCLEOTIDE SEQUENCE [LARGE SCALE MRNA]</scope>
    <source>
        <strain>Hereford</strain>
        <tissue>Fetal skin</tissue>
    </source>
</reference>